<gene>
    <name evidence="4" type="primary">TPS-Lonp</name>
</gene>
<accession>C0PPM5</accession>
<name>ALGPS_PICSI</name>
<reference key="1">
    <citation type="journal article" date="2008" name="BMC Genomics">
        <title>A conifer genomics resource of 200,000 spruce (Picea spp.) ESTs and 6,464 high-quality, sequence-finished full-length cDNAs for Sitka spruce (Picea sitchensis).</title>
        <authorList>
            <person name="Ralph S.G."/>
            <person name="Chun H.J.E."/>
            <person name="Kolosova N."/>
            <person name="Cooper D."/>
            <person name="Oddy C."/>
            <person name="Ritland C.E."/>
            <person name="Kirkpatrick R."/>
            <person name="Moore R."/>
            <person name="Barber S."/>
            <person name="Holt R.A."/>
            <person name="Jones S.J.M."/>
            <person name="Marra M.A."/>
            <person name="Douglas C.J."/>
            <person name="Ritland K."/>
            <person name="Bohlmann J."/>
        </authorList>
    </citation>
    <scope>NUCLEOTIDE SEQUENCE [LARGE SCALE MRNA]</scope>
    <source>
        <strain>cv. FB3-425</strain>
        <tissue>Green leaf</tissue>
    </source>
</reference>
<reference key="2">
    <citation type="journal article" date="2011" name="BMC Plant Biol.">
        <title>Transcriptome mining, functional characterization, and phylogeny of a large terpene synthase gene family in spruce (Picea spp.).</title>
        <authorList>
            <person name="Keeling C.I."/>
            <person name="Weisshaar S."/>
            <person name="Ralph S.G."/>
            <person name="Jancsik S."/>
            <person name="Hamberger B."/>
            <person name="Dullat H.K."/>
            <person name="Bohlmann J."/>
        </authorList>
    </citation>
    <scope>NUCLEOTIDE SEQUENCE [MRNA]</scope>
    <scope>CATALYTIC ACTIVITY</scope>
    <scope>FUNCTION</scope>
    <scope>PATHWAY</scope>
    <scope>GENE FAMILY</scope>
    <source>
        <strain>cv. FB3-425</strain>
    </source>
</reference>
<feature type="chain" id="PRO_0000454416" description="Alpha-longipinene synthase">
    <location>
        <begin position="1"/>
        <end position="579"/>
    </location>
</feature>
<feature type="short sequence motif" description="DDXXD motif" evidence="1">
    <location>
        <begin position="332"/>
        <end position="336"/>
    </location>
</feature>
<feature type="binding site" evidence="2">
    <location>
        <position position="332"/>
    </location>
    <ligand>
        <name>Mg(2+)</name>
        <dbReference type="ChEBI" id="CHEBI:18420"/>
        <label>1</label>
    </ligand>
</feature>
<feature type="binding site" evidence="2">
    <location>
        <position position="332"/>
    </location>
    <ligand>
        <name>Mg(2+)</name>
        <dbReference type="ChEBI" id="CHEBI:18420"/>
        <label>2</label>
    </ligand>
</feature>
<feature type="binding site" evidence="2">
    <location>
        <position position="336"/>
    </location>
    <ligand>
        <name>Mg(2+)</name>
        <dbReference type="ChEBI" id="CHEBI:18420"/>
        <label>1</label>
    </ligand>
</feature>
<feature type="binding site" evidence="2">
    <location>
        <position position="336"/>
    </location>
    <ligand>
        <name>Mg(2+)</name>
        <dbReference type="ChEBI" id="CHEBI:18420"/>
        <label>2</label>
    </ligand>
</feature>
<feature type="binding site" evidence="2">
    <location>
        <position position="476"/>
    </location>
    <ligand>
        <name>Mg(2+)</name>
        <dbReference type="ChEBI" id="CHEBI:18420"/>
        <label>3</label>
    </ligand>
</feature>
<feature type="binding site" evidence="2">
    <location>
        <position position="484"/>
    </location>
    <ligand>
        <name>Mg(2+)</name>
        <dbReference type="ChEBI" id="CHEBI:18420"/>
        <label>3</label>
    </ligand>
</feature>
<sequence>MAQISKCSSLSTELNESSIISHHHGNLWDDDFIQSLKSSNGAPQYHERAEKLVEEIKNLVVSEMKDCNDDLIRHLQMVDIFECLGIDRHFQNEIQVALDYVYRYWNELEGIGIGSRDSLIKDFNATALGFRALRLHRYNVSSDVLENFKNENGQFFCSSTVEEKEVRCMLTLFRASEISFPGEKVMDEAKAFTTEYLTKVLTGVDVTDVDQSLLREVKYALEFPWHCSLPRWEARNFIEICGQNDSWLKSIMNKRVLELAKLDFNILQCAHHRELQLLSRCWWSQSDIAQQNFYRKRHVEFYFWVVIGTFEPEFSTCRITFAKIATLMTILDDLYDTHGTLEQLKIFTEGVKRWDLSLVDSLPDYIKITFEFFLNTSNELIAEVAKTQERDMSAYIRKTWERYLEAYMQEAEWITAGHVPTFDEYMKNGISSSGMCILNLYSLLLMGQLLPDDVLEQIHSPSKIHELVELTARLVDDSKDFETNKVGGELASGIECYVKDNPECTLEDASNHLNGLLDLTVKELNWEFVRHDSVALCFKKFAFNVARGLRLIYKYRDGFDVSNQEMKTHIFKILIDPLT</sequence>
<comment type="function">
    <text evidence="3">Terpene synthase (TPS) involved in the biosynthesis of sesquiterpene natural products included in conifer oleoresin secretions and volatile emissions; these compounds contribute to biotic and abiotic stress defense against herbivores and pathogens (PubMed:21385377). Catalyzes the conversion of (2E,6E)-farnesyl diphosphate (FPP) to alpha-longipinene (PubMed:21385377).</text>
</comment>
<comment type="catalytic activity">
    <reaction evidence="3">
        <text>(2E,6E)-farnesyl diphosphate = alpha-longipinene + diphosphate</text>
        <dbReference type="Rhea" id="RHEA:31439"/>
        <dbReference type="ChEBI" id="CHEBI:33019"/>
        <dbReference type="ChEBI" id="CHEBI:62753"/>
        <dbReference type="ChEBI" id="CHEBI:175763"/>
        <dbReference type="EC" id="4.2.3.80"/>
    </reaction>
</comment>
<comment type="cofactor">
    <cofactor evidence="1">
        <name>Mg(2+)</name>
        <dbReference type="ChEBI" id="CHEBI:18420"/>
    </cofactor>
    <cofactor evidence="1">
        <name>Mn(2+)</name>
        <dbReference type="ChEBI" id="CHEBI:29035"/>
    </cofactor>
    <text evidence="1">Binds 3 Mg(2+) or Mn(2+) ions per subunit.</text>
</comment>
<comment type="pathway">
    <text evidence="3">Sesquiterpene biosynthesis.</text>
</comment>
<comment type="pathway">
    <text evidence="3">Terpene metabolism; oleoresin biosynthesis.</text>
</comment>
<comment type="domain">
    <text evidence="1">The Asp-Asp-Xaa-Xaa-Asp/Glu (DDXXD/E) motif is important for the catalytic activity, presumably through binding to Mg(2+).</text>
</comment>
<comment type="similarity">
    <text evidence="5">Belongs to the terpene synthase family. Tpsd subfamily.</text>
</comment>
<protein>
    <recommendedName>
        <fullName evidence="4">Alpha-longipinene synthase</fullName>
        <ecNumber evidence="3">4.2.3.80</ecNumber>
    </recommendedName>
    <alternativeName>
        <fullName evidence="4">Terpene synthase TPS-Lonp</fullName>
        <shortName evidence="4">PsTPS-Lonp</shortName>
    </alternativeName>
</protein>
<organism>
    <name type="scientific">Picea sitchensis</name>
    <name type="common">Sitka spruce</name>
    <name type="synonym">Pinus sitchensis</name>
    <dbReference type="NCBI Taxonomy" id="3332"/>
    <lineage>
        <taxon>Eukaryota</taxon>
        <taxon>Viridiplantae</taxon>
        <taxon>Streptophyta</taxon>
        <taxon>Embryophyta</taxon>
        <taxon>Tracheophyta</taxon>
        <taxon>Spermatophyta</taxon>
        <taxon>Pinopsida</taxon>
        <taxon>Pinidae</taxon>
        <taxon>Conifers I</taxon>
        <taxon>Pinales</taxon>
        <taxon>Pinaceae</taxon>
        <taxon>Picea</taxon>
    </lineage>
</organism>
<keyword id="KW-0456">Lyase</keyword>
<keyword id="KW-0460">Magnesium</keyword>
<keyword id="KW-0479">Metal-binding</keyword>
<evidence type="ECO:0000250" key="1">
    <source>
        <dbReference type="UniProtKB" id="A0A1C9J6A7"/>
    </source>
</evidence>
<evidence type="ECO:0000250" key="2">
    <source>
        <dbReference type="UniProtKB" id="Q40577"/>
    </source>
</evidence>
<evidence type="ECO:0000269" key="3">
    <source>
    </source>
</evidence>
<evidence type="ECO:0000303" key="4">
    <source>
    </source>
</evidence>
<evidence type="ECO:0000305" key="5"/>
<proteinExistence type="evidence at protein level"/>
<dbReference type="EC" id="4.2.3.80" evidence="3"/>
<dbReference type="EMBL" id="BT070245">
    <property type="protein sequence ID" value="ACN39765.1"/>
    <property type="molecule type" value="mRNA"/>
</dbReference>
<dbReference type="EMBL" id="HQ426161">
    <property type="protein sequence ID" value="ADZ45516.1"/>
    <property type="molecule type" value="mRNA"/>
</dbReference>
<dbReference type="SMR" id="C0PPM5"/>
<dbReference type="OMA" id="CAHHREL"/>
<dbReference type="UniPathway" id="UPA00924"/>
<dbReference type="GO" id="GO:0016829">
    <property type="term" value="F:lyase activity"/>
    <property type="evidence" value="ECO:0000314"/>
    <property type="project" value="UniProtKB"/>
</dbReference>
<dbReference type="GO" id="GO:0000287">
    <property type="term" value="F:magnesium ion binding"/>
    <property type="evidence" value="ECO:0007669"/>
    <property type="project" value="InterPro"/>
</dbReference>
<dbReference type="GO" id="GO:0010333">
    <property type="term" value="F:terpene synthase activity"/>
    <property type="evidence" value="ECO:0007669"/>
    <property type="project" value="InterPro"/>
</dbReference>
<dbReference type="GO" id="GO:0016102">
    <property type="term" value="P:diterpenoid biosynthetic process"/>
    <property type="evidence" value="ECO:0007669"/>
    <property type="project" value="InterPro"/>
</dbReference>
<dbReference type="GO" id="GO:0010597">
    <property type="term" value="P:green leaf volatile biosynthetic process"/>
    <property type="evidence" value="ECO:0000314"/>
    <property type="project" value="UniProtKB"/>
</dbReference>
<dbReference type="GO" id="GO:0016106">
    <property type="term" value="P:sesquiterpenoid biosynthetic process"/>
    <property type="evidence" value="ECO:0000314"/>
    <property type="project" value="UniProtKB"/>
</dbReference>
<dbReference type="CDD" id="cd00684">
    <property type="entry name" value="Terpene_cyclase_plant_C1"/>
    <property type="match status" value="1"/>
</dbReference>
<dbReference type="FunFam" id="1.50.10.130:FF:000002">
    <property type="entry name" value="Ent-copalyl diphosphate synthase, chloroplastic"/>
    <property type="match status" value="1"/>
</dbReference>
<dbReference type="FunFam" id="1.10.600.10:FF:000005">
    <property type="entry name" value="Ent-kaur-16-ene synthase, chloroplastic"/>
    <property type="match status" value="1"/>
</dbReference>
<dbReference type="Gene3D" id="1.10.600.10">
    <property type="entry name" value="Farnesyl Diphosphate Synthase"/>
    <property type="match status" value="1"/>
</dbReference>
<dbReference type="Gene3D" id="1.50.10.130">
    <property type="entry name" value="Terpene synthase, N-terminal domain"/>
    <property type="match status" value="1"/>
</dbReference>
<dbReference type="InterPro" id="IPR008949">
    <property type="entry name" value="Isoprenoid_synthase_dom_sf"/>
</dbReference>
<dbReference type="InterPro" id="IPR034741">
    <property type="entry name" value="Terpene_cyclase-like_1_C"/>
</dbReference>
<dbReference type="InterPro" id="IPR044814">
    <property type="entry name" value="Terpene_cyclase_plant_C1"/>
</dbReference>
<dbReference type="InterPro" id="IPR001906">
    <property type="entry name" value="Terpene_synth_N"/>
</dbReference>
<dbReference type="InterPro" id="IPR036965">
    <property type="entry name" value="Terpene_synth_N_sf"/>
</dbReference>
<dbReference type="InterPro" id="IPR050148">
    <property type="entry name" value="Terpene_synthase-like"/>
</dbReference>
<dbReference type="InterPro" id="IPR005630">
    <property type="entry name" value="Terpene_synthase_metal-bd"/>
</dbReference>
<dbReference type="InterPro" id="IPR008930">
    <property type="entry name" value="Terpenoid_cyclase/PrenylTrfase"/>
</dbReference>
<dbReference type="PANTHER" id="PTHR31225">
    <property type="entry name" value="OS04G0344100 PROTEIN-RELATED"/>
    <property type="match status" value="1"/>
</dbReference>
<dbReference type="Pfam" id="PF01397">
    <property type="entry name" value="Terpene_synth"/>
    <property type="match status" value="1"/>
</dbReference>
<dbReference type="Pfam" id="PF03936">
    <property type="entry name" value="Terpene_synth_C"/>
    <property type="match status" value="1"/>
</dbReference>
<dbReference type="SFLD" id="SFLDS00005">
    <property type="entry name" value="Isoprenoid_Synthase_Type_I"/>
    <property type="match status" value="1"/>
</dbReference>
<dbReference type="SFLD" id="SFLDG01019">
    <property type="entry name" value="Terpene_Cyclase_Like_1_C_Termi"/>
    <property type="match status" value="1"/>
</dbReference>
<dbReference type="SFLD" id="SFLDG01014">
    <property type="entry name" value="Terpene_Cyclase_Like_1_N-term"/>
    <property type="match status" value="1"/>
</dbReference>
<dbReference type="SUPFAM" id="SSF48239">
    <property type="entry name" value="Terpenoid cyclases/Protein prenyltransferases"/>
    <property type="match status" value="1"/>
</dbReference>
<dbReference type="SUPFAM" id="SSF48576">
    <property type="entry name" value="Terpenoid synthases"/>
    <property type="match status" value="1"/>
</dbReference>